<dbReference type="EMBL" id="CU329670">
    <property type="protein sequence ID" value="CAA90491.1"/>
    <property type="molecule type" value="Genomic_DNA"/>
</dbReference>
<dbReference type="PIR" id="T38552">
    <property type="entry name" value="S58148"/>
</dbReference>
<dbReference type="RefSeq" id="NP_592975.1">
    <property type="nucleotide sequence ID" value="NM_001018375.2"/>
</dbReference>
<dbReference type="BioGRID" id="278974">
    <property type="interactions" value="96"/>
</dbReference>
<dbReference type="FunCoup" id="Q09696">
    <property type="interactions" value="22"/>
</dbReference>
<dbReference type="IntAct" id="Q09696">
    <property type="interactions" value="1"/>
</dbReference>
<dbReference type="STRING" id="284812.Q09696"/>
<dbReference type="SwissPalm" id="Q09696"/>
<dbReference type="PaxDb" id="4896-SPAC2F7.04.1"/>
<dbReference type="EnsemblFungi" id="SPAC2F7.04.1">
    <property type="protein sequence ID" value="SPAC2F7.04.1:pep"/>
    <property type="gene ID" value="SPAC2F7.04"/>
</dbReference>
<dbReference type="GeneID" id="2542516"/>
<dbReference type="KEGG" id="spo:2542516"/>
<dbReference type="PomBase" id="SPAC2F7.04">
    <property type="gene designation" value="med1"/>
</dbReference>
<dbReference type="VEuPathDB" id="FungiDB:SPAC2F7.04"/>
<dbReference type="eggNOG" id="ENOG502RYK5">
    <property type="taxonomic scope" value="Eukaryota"/>
</dbReference>
<dbReference type="HOGENOM" id="CLU_602903_0_0_1"/>
<dbReference type="InParanoid" id="Q09696"/>
<dbReference type="OMA" id="QQSCFQY"/>
<dbReference type="PRO" id="PR:Q09696"/>
<dbReference type="Proteomes" id="UP000002485">
    <property type="component" value="Chromosome I"/>
</dbReference>
<dbReference type="GO" id="GO:0016592">
    <property type="term" value="C:mediator complex"/>
    <property type="evidence" value="ECO:0000314"/>
    <property type="project" value="PomBase"/>
</dbReference>
<dbReference type="GO" id="GO:0005634">
    <property type="term" value="C:nucleus"/>
    <property type="evidence" value="ECO:0007005"/>
    <property type="project" value="PomBase"/>
</dbReference>
<dbReference type="GO" id="GO:0003713">
    <property type="term" value="F:transcription coactivator activity"/>
    <property type="evidence" value="ECO:0000314"/>
    <property type="project" value="PomBase"/>
</dbReference>
<dbReference type="GO" id="GO:0060261">
    <property type="term" value="P:positive regulation of transcription initiation by RNA polymerase II"/>
    <property type="evidence" value="ECO:0000269"/>
    <property type="project" value="PomBase"/>
</dbReference>
<dbReference type="InterPro" id="IPR019680">
    <property type="entry name" value="Mediator_Med1"/>
</dbReference>
<dbReference type="PANTHER" id="PTHR35041">
    <property type="entry name" value="MEDIATOR OF RNA POLYMERASE II TRANSCRIPTION SUBUNIT 1"/>
    <property type="match status" value="1"/>
</dbReference>
<dbReference type="PANTHER" id="PTHR35041:SF4">
    <property type="entry name" value="MEDIATOR OF RNA POLYMERASE II TRANSCRIPTION SUBUNIT 1"/>
    <property type="match status" value="1"/>
</dbReference>
<dbReference type="Pfam" id="PF10744">
    <property type="entry name" value="Med1"/>
    <property type="match status" value="2"/>
</dbReference>
<comment type="function">
    <text>Component of the Mediator complex, a coactivator involved in the regulated transcription of nearly all RNA polymerase II-dependent genes. Mediator functions as a bridge to convey information from gene-specific regulatory proteins to the basal RNA polymerase II transcription machinery. Mediator is recruited to promoters by direct interactions with regulatory proteins and serves as a scaffold for the assembly of a functional preinitiation complex with RNA polymerase II and the general transcription factors.</text>
</comment>
<comment type="subunit">
    <text evidence="2 3">Component of the Mediator complex.</text>
</comment>
<comment type="subcellular location">
    <subcellularLocation>
        <location evidence="1">Nucleus</location>
    </subcellularLocation>
</comment>
<comment type="similarity">
    <text evidence="4">Belongs to the Mediator complex subunit 1 family.</text>
</comment>
<name>MED1_SCHPO</name>
<gene>
    <name type="primary">med1</name>
    <name type="synonym">pmc2</name>
    <name type="ORF">SPAC2F7.04</name>
</gene>
<accession>Q09696</accession>
<evidence type="ECO:0000250" key="1"/>
<evidence type="ECO:0000269" key="2">
    <source>
    </source>
</evidence>
<evidence type="ECO:0000269" key="3">
    <source>
    </source>
</evidence>
<evidence type="ECO:0000305" key="4"/>
<reference key="1">
    <citation type="journal article" date="2002" name="Nature">
        <title>The genome sequence of Schizosaccharomyces pombe.</title>
        <authorList>
            <person name="Wood V."/>
            <person name="Gwilliam R."/>
            <person name="Rajandream M.A."/>
            <person name="Lyne M.H."/>
            <person name="Lyne R."/>
            <person name="Stewart A."/>
            <person name="Sgouros J.G."/>
            <person name="Peat N."/>
            <person name="Hayles J."/>
            <person name="Baker S.G."/>
            <person name="Basham D."/>
            <person name="Bowman S."/>
            <person name="Brooks K."/>
            <person name="Brown D."/>
            <person name="Brown S."/>
            <person name="Chillingworth T."/>
            <person name="Churcher C.M."/>
            <person name="Collins M."/>
            <person name="Connor R."/>
            <person name="Cronin A."/>
            <person name="Davis P."/>
            <person name="Feltwell T."/>
            <person name="Fraser A."/>
            <person name="Gentles S."/>
            <person name="Goble A."/>
            <person name="Hamlin N."/>
            <person name="Harris D.E."/>
            <person name="Hidalgo J."/>
            <person name="Hodgson G."/>
            <person name="Holroyd S."/>
            <person name="Hornsby T."/>
            <person name="Howarth S."/>
            <person name="Huckle E.J."/>
            <person name="Hunt S."/>
            <person name="Jagels K."/>
            <person name="James K.D."/>
            <person name="Jones L."/>
            <person name="Jones M."/>
            <person name="Leather S."/>
            <person name="McDonald S."/>
            <person name="McLean J."/>
            <person name="Mooney P."/>
            <person name="Moule S."/>
            <person name="Mungall K.L."/>
            <person name="Murphy L.D."/>
            <person name="Niblett D."/>
            <person name="Odell C."/>
            <person name="Oliver K."/>
            <person name="O'Neil S."/>
            <person name="Pearson D."/>
            <person name="Quail M.A."/>
            <person name="Rabbinowitsch E."/>
            <person name="Rutherford K.M."/>
            <person name="Rutter S."/>
            <person name="Saunders D."/>
            <person name="Seeger K."/>
            <person name="Sharp S."/>
            <person name="Skelton J."/>
            <person name="Simmonds M.N."/>
            <person name="Squares R."/>
            <person name="Squares S."/>
            <person name="Stevens K."/>
            <person name="Taylor K."/>
            <person name="Taylor R.G."/>
            <person name="Tivey A."/>
            <person name="Walsh S.V."/>
            <person name="Warren T."/>
            <person name="Whitehead S."/>
            <person name="Woodward J.R."/>
            <person name="Volckaert G."/>
            <person name="Aert R."/>
            <person name="Robben J."/>
            <person name="Grymonprez B."/>
            <person name="Weltjens I."/>
            <person name="Vanstreels E."/>
            <person name="Rieger M."/>
            <person name="Schaefer M."/>
            <person name="Mueller-Auer S."/>
            <person name="Gabel C."/>
            <person name="Fuchs M."/>
            <person name="Duesterhoeft A."/>
            <person name="Fritzc C."/>
            <person name="Holzer E."/>
            <person name="Moestl D."/>
            <person name="Hilbert H."/>
            <person name="Borzym K."/>
            <person name="Langer I."/>
            <person name="Beck A."/>
            <person name="Lehrach H."/>
            <person name="Reinhardt R."/>
            <person name="Pohl T.M."/>
            <person name="Eger P."/>
            <person name="Zimmermann W."/>
            <person name="Wedler H."/>
            <person name="Wambutt R."/>
            <person name="Purnelle B."/>
            <person name="Goffeau A."/>
            <person name="Cadieu E."/>
            <person name="Dreano S."/>
            <person name="Gloux S."/>
            <person name="Lelaure V."/>
            <person name="Mottier S."/>
            <person name="Galibert F."/>
            <person name="Aves S.J."/>
            <person name="Xiang Z."/>
            <person name="Hunt C."/>
            <person name="Moore K."/>
            <person name="Hurst S.M."/>
            <person name="Lucas M."/>
            <person name="Rochet M."/>
            <person name="Gaillardin C."/>
            <person name="Tallada V.A."/>
            <person name="Garzon A."/>
            <person name="Thode G."/>
            <person name="Daga R.R."/>
            <person name="Cruzado L."/>
            <person name="Jimenez J."/>
            <person name="Sanchez M."/>
            <person name="del Rey F."/>
            <person name="Benito J."/>
            <person name="Dominguez A."/>
            <person name="Revuelta J.L."/>
            <person name="Moreno S."/>
            <person name="Armstrong J."/>
            <person name="Forsburg S.L."/>
            <person name="Cerutti L."/>
            <person name="Lowe T."/>
            <person name="McCombie W.R."/>
            <person name="Paulsen I."/>
            <person name="Potashkin J."/>
            <person name="Shpakovski G.V."/>
            <person name="Ussery D."/>
            <person name="Barrell B.G."/>
            <person name="Nurse P."/>
        </authorList>
    </citation>
    <scope>NUCLEOTIDE SEQUENCE [LARGE SCALE GENOMIC DNA]</scope>
    <source>
        <strain>972 / ATCC 24843</strain>
    </source>
</reference>
<reference key="2">
    <citation type="journal article" date="2000" name="J. Biol. Chem.">
        <title>Purification and characterization of RNA polymerase II holoenzyme from Schizosaccharomyces pombe.</title>
        <authorList>
            <person name="Spaehr H."/>
            <person name="Beve J."/>
            <person name="Larsson T."/>
            <person name="Bergstroem J."/>
            <person name="Karlsson K.-A."/>
            <person name="Gustafsson C.M."/>
        </authorList>
    </citation>
    <scope>IDENTIFICATION BY MASS SPECTROMETRY</scope>
    <scope>IDENTIFICATION IN THE MEDIATOR COMPLEX</scope>
    <source>
        <strain>972 / ATCC 24843</strain>
    </source>
</reference>
<reference key="3">
    <citation type="journal article" date="2001" name="Proc. Natl. Acad. Sci. U.S.A.">
        <title>Analysis of Schizosaccharomyces pombe mediator reveals a set of essential subunits conserved between yeast and metazoan cells.</title>
        <authorList>
            <person name="Spaehr H."/>
            <person name="Samuelsen C.O."/>
            <person name="Baraznenok V."/>
            <person name="Ernest I."/>
            <person name="Huylebroeck D."/>
            <person name="Remacle J.E."/>
            <person name="Samuelsson T."/>
            <person name="Kieselbach T."/>
            <person name="Holmberg S."/>
            <person name="Gustafsson C.M."/>
        </authorList>
    </citation>
    <scope>IDENTIFICATION BY MASS SPECTROMETRY</scope>
    <scope>IDENTIFICATION IN THE MEDIATOR COMPLEX</scope>
</reference>
<keyword id="KW-0010">Activator</keyword>
<keyword id="KW-0539">Nucleus</keyword>
<keyword id="KW-1185">Reference proteome</keyword>
<keyword id="KW-0804">Transcription</keyword>
<keyword id="KW-0805">Transcription regulation</keyword>
<organism>
    <name type="scientific">Schizosaccharomyces pombe (strain 972 / ATCC 24843)</name>
    <name type="common">Fission yeast</name>
    <dbReference type="NCBI Taxonomy" id="284812"/>
    <lineage>
        <taxon>Eukaryota</taxon>
        <taxon>Fungi</taxon>
        <taxon>Dikarya</taxon>
        <taxon>Ascomycota</taxon>
        <taxon>Taphrinomycotina</taxon>
        <taxon>Schizosaccharomycetes</taxon>
        <taxon>Schizosaccharomycetales</taxon>
        <taxon>Schizosaccharomycetaceae</taxon>
        <taxon>Schizosaccharomyces</taxon>
    </lineage>
</organism>
<feature type="chain" id="PRO_0000096371" description="Mediator of RNA polymerase II transcription subunit 1">
    <location>
        <begin position="1"/>
        <end position="454"/>
    </location>
</feature>
<sequence length="454" mass="51390">MDRPHLFSEVHFRRNASNPNQINWTRYWIDCLSSVPWNDISVTGFEYLAKKYGLEVFQDSSKPNEVVLSLAGKIILIDITVPINASPKDINVVLAFANASGEQYNNPVAEKLLKDAIYNCNTPLFEKNVKWLATFDHSSPSVQQSCFQYLDSLSSSLNAIYEAELSLLAQEENVIMHGNGKPLSNYEGQLGLRIVYWKLLDKTYSTQIFMDNLSHESLPHLLFGYNLLNSPPILQSSKINWALENTLTPIPTTMELVFDDINLIIPEQGVKPLLDLLHVHDITIPWPVQNYSHMLGLPSKSTVNYKFINKNQAIQLTGFDVSARSLRHVPFHHPKQIRGILAIVRQYLLLQLILENIKSADLAETAASSSLHLSLYFKEHPIVHAQYQEINKLNNSEQIIIVLSVLSDGRLNVDYMSSGGKELSKQQSHVFQKLIQQTCNIGLAIEVFIKKVVN</sequence>
<proteinExistence type="evidence at protein level"/>
<protein>
    <recommendedName>
        <fullName>Mediator of RNA polymerase II transcription subunit 1</fullName>
    </recommendedName>
    <alternativeName>
        <fullName>Mediator complex subunit 1</fullName>
    </alternativeName>
    <alternativeName>
        <fullName>RNA polymerase II Mediator complex protein pmc2</fullName>
    </alternativeName>
</protein>